<gene>
    <name evidence="1" type="primary">ispE</name>
    <name type="ordered locus">Hac_0175</name>
</gene>
<organism>
    <name type="scientific">Helicobacter acinonychis (strain Sheeba)</name>
    <dbReference type="NCBI Taxonomy" id="382638"/>
    <lineage>
        <taxon>Bacteria</taxon>
        <taxon>Pseudomonadati</taxon>
        <taxon>Campylobacterota</taxon>
        <taxon>Epsilonproteobacteria</taxon>
        <taxon>Campylobacterales</taxon>
        <taxon>Helicobacteraceae</taxon>
        <taxon>Helicobacter</taxon>
    </lineage>
</organism>
<evidence type="ECO:0000255" key="1">
    <source>
        <dbReference type="HAMAP-Rule" id="MF_00061"/>
    </source>
</evidence>
<feature type="chain" id="PRO_1000007855" description="4-diphosphocytidyl-2-C-methyl-D-erythritol kinase">
    <location>
        <begin position="1"/>
        <end position="268"/>
    </location>
</feature>
<feature type="active site" evidence="1">
    <location>
        <position position="10"/>
    </location>
</feature>
<feature type="active site" evidence="1">
    <location>
        <position position="143"/>
    </location>
</feature>
<feature type="binding site" evidence="1">
    <location>
        <begin position="101"/>
        <end position="111"/>
    </location>
    <ligand>
        <name>ATP</name>
        <dbReference type="ChEBI" id="CHEBI:30616"/>
    </ligand>
</feature>
<name>ISPE_HELAH</name>
<accession>Q17Z99</accession>
<dbReference type="EC" id="2.7.1.148" evidence="1"/>
<dbReference type="EMBL" id="AM260522">
    <property type="protein sequence ID" value="CAJ99027.1"/>
    <property type="molecule type" value="Genomic_DNA"/>
</dbReference>
<dbReference type="RefSeq" id="WP_011577143.1">
    <property type="nucleotide sequence ID" value="NC_008229.1"/>
</dbReference>
<dbReference type="SMR" id="Q17Z99"/>
<dbReference type="STRING" id="382638.Hac_0175"/>
<dbReference type="GeneID" id="31757706"/>
<dbReference type="KEGG" id="hac:Hac_0175"/>
<dbReference type="eggNOG" id="COG1947">
    <property type="taxonomic scope" value="Bacteria"/>
</dbReference>
<dbReference type="HOGENOM" id="CLU_053057_2_2_7"/>
<dbReference type="OrthoDB" id="9809438at2"/>
<dbReference type="UniPathway" id="UPA00056">
    <property type="reaction ID" value="UER00094"/>
</dbReference>
<dbReference type="Proteomes" id="UP000000775">
    <property type="component" value="Chromosome"/>
</dbReference>
<dbReference type="GO" id="GO:0050515">
    <property type="term" value="F:4-(cytidine 5'-diphospho)-2-C-methyl-D-erythritol kinase activity"/>
    <property type="evidence" value="ECO:0007669"/>
    <property type="project" value="UniProtKB-UniRule"/>
</dbReference>
<dbReference type="GO" id="GO:0005524">
    <property type="term" value="F:ATP binding"/>
    <property type="evidence" value="ECO:0007669"/>
    <property type="project" value="UniProtKB-UniRule"/>
</dbReference>
<dbReference type="GO" id="GO:0019288">
    <property type="term" value="P:isopentenyl diphosphate biosynthetic process, methylerythritol 4-phosphate pathway"/>
    <property type="evidence" value="ECO:0007669"/>
    <property type="project" value="UniProtKB-UniRule"/>
</dbReference>
<dbReference type="GO" id="GO:0016114">
    <property type="term" value="P:terpenoid biosynthetic process"/>
    <property type="evidence" value="ECO:0007669"/>
    <property type="project" value="InterPro"/>
</dbReference>
<dbReference type="Gene3D" id="3.30.230.10">
    <property type="match status" value="1"/>
</dbReference>
<dbReference type="Gene3D" id="3.30.70.890">
    <property type="entry name" value="GHMP kinase, C-terminal domain"/>
    <property type="match status" value="1"/>
</dbReference>
<dbReference type="HAMAP" id="MF_00061">
    <property type="entry name" value="IspE"/>
    <property type="match status" value="1"/>
</dbReference>
<dbReference type="InterPro" id="IPR036554">
    <property type="entry name" value="GHMP_kinase_C_sf"/>
</dbReference>
<dbReference type="InterPro" id="IPR006204">
    <property type="entry name" value="GHMP_kinase_N_dom"/>
</dbReference>
<dbReference type="InterPro" id="IPR004424">
    <property type="entry name" value="IspE"/>
</dbReference>
<dbReference type="InterPro" id="IPR020568">
    <property type="entry name" value="Ribosomal_Su5_D2-typ_SF"/>
</dbReference>
<dbReference type="InterPro" id="IPR014721">
    <property type="entry name" value="Ribsml_uS5_D2-typ_fold_subgr"/>
</dbReference>
<dbReference type="NCBIfam" id="TIGR00154">
    <property type="entry name" value="ispE"/>
    <property type="match status" value="1"/>
</dbReference>
<dbReference type="NCBIfam" id="NF003216">
    <property type="entry name" value="PRK04181.1"/>
    <property type="match status" value="1"/>
</dbReference>
<dbReference type="PANTHER" id="PTHR43527">
    <property type="entry name" value="4-DIPHOSPHOCYTIDYL-2-C-METHYL-D-ERYTHRITOL KINASE, CHLOROPLASTIC"/>
    <property type="match status" value="1"/>
</dbReference>
<dbReference type="PANTHER" id="PTHR43527:SF2">
    <property type="entry name" value="4-DIPHOSPHOCYTIDYL-2-C-METHYL-D-ERYTHRITOL KINASE, CHLOROPLASTIC"/>
    <property type="match status" value="1"/>
</dbReference>
<dbReference type="Pfam" id="PF00288">
    <property type="entry name" value="GHMP_kinases_N"/>
    <property type="match status" value="1"/>
</dbReference>
<dbReference type="PIRSF" id="PIRSF010376">
    <property type="entry name" value="IspE"/>
    <property type="match status" value="1"/>
</dbReference>
<dbReference type="SUPFAM" id="SSF55060">
    <property type="entry name" value="GHMP Kinase, C-terminal domain"/>
    <property type="match status" value="1"/>
</dbReference>
<dbReference type="SUPFAM" id="SSF54211">
    <property type="entry name" value="Ribosomal protein S5 domain 2-like"/>
    <property type="match status" value="1"/>
</dbReference>
<protein>
    <recommendedName>
        <fullName evidence="1">4-diphosphocytidyl-2-C-methyl-D-erythritol kinase</fullName>
        <shortName evidence="1">CMK</shortName>
        <ecNumber evidence="1">2.7.1.148</ecNumber>
    </recommendedName>
    <alternativeName>
        <fullName evidence="1">4-(cytidine-5'-diphospho)-2-C-methyl-D-erythritol kinase</fullName>
    </alternativeName>
</protein>
<keyword id="KW-0067">ATP-binding</keyword>
<keyword id="KW-0414">Isoprene biosynthesis</keyword>
<keyword id="KW-0418">Kinase</keyword>
<keyword id="KW-0547">Nucleotide-binding</keyword>
<keyword id="KW-0808">Transferase</keyword>
<reference key="1">
    <citation type="journal article" date="2006" name="PLoS Genet.">
        <title>Who ate whom? Adaptive Helicobacter genomic changes that accompanied a host jump from early humans to large felines.</title>
        <authorList>
            <person name="Eppinger M."/>
            <person name="Baar C."/>
            <person name="Linz B."/>
            <person name="Raddatz G."/>
            <person name="Lanz C."/>
            <person name="Keller H."/>
            <person name="Morelli G."/>
            <person name="Gressmann H."/>
            <person name="Achtman M."/>
            <person name="Schuster S.C."/>
        </authorList>
    </citation>
    <scope>NUCLEOTIDE SEQUENCE [LARGE SCALE GENOMIC DNA]</scope>
    <source>
        <strain>Sheeba</strain>
    </source>
</reference>
<comment type="function">
    <text evidence="1">Catalyzes the phosphorylation of the position 2 hydroxy group of 4-diphosphocytidyl-2C-methyl-D-erythritol.</text>
</comment>
<comment type="catalytic activity">
    <reaction evidence="1">
        <text>4-CDP-2-C-methyl-D-erythritol + ATP = 4-CDP-2-C-methyl-D-erythritol 2-phosphate + ADP + H(+)</text>
        <dbReference type="Rhea" id="RHEA:18437"/>
        <dbReference type="ChEBI" id="CHEBI:15378"/>
        <dbReference type="ChEBI" id="CHEBI:30616"/>
        <dbReference type="ChEBI" id="CHEBI:57823"/>
        <dbReference type="ChEBI" id="CHEBI:57919"/>
        <dbReference type="ChEBI" id="CHEBI:456216"/>
        <dbReference type="EC" id="2.7.1.148"/>
    </reaction>
</comment>
<comment type="pathway">
    <text evidence="1">Isoprenoid biosynthesis; isopentenyl diphosphate biosynthesis via DXP pathway; isopentenyl diphosphate from 1-deoxy-D-xylulose 5-phosphate: step 3/6.</text>
</comment>
<comment type="similarity">
    <text evidence="1">Belongs to the GHMP kinase family. IspE subfamily.</text>
</comment>
<proteinExistence type="inferred from homology"/>
<sequence length="268" mass="30259">MTHAFEVYPKVNIFLKILYKEGAYHKLISRMCLVKGQLKDIISVKNAPSFCLKGNFDCPLEENSLFKALQILKNFLKSKKLSHSVIKSLDTLAIEVEKNIPTQAGLGGGSTDAGGLLYHLNQIFDLRLNLEELYTIGSLVGADTNFFISQYKSANATSYGEVIENFEEKPLENRLEIYVPDNIFCSTKAVYQAYKPKTCFYQAKEWLKKPSLECLKTCDRSELNDLLKPALLTHQALKDIESQLGKEWFFSGSGSAFFRLKPTQKGSE</sequence>